<gene>
    <name evidence="1" type="primary">gpmI</name>
    <name type="ordered locus">SAS0741</name>
</gene>
<sequence>MAKKPTALIILDGFANRESEHGNAVKLANKPNFDRYYNKYPTTQIEASGLDVGLPEGQMGNSEVGHMNIGAGRIVYQSLTRINKSIEDGDFFENDVLNNAIAHVNSHDSALHIFGLLSDGGVHSHYKHLFALLELAKKQGVEKVYVHAFLDGRDVDQKSALKYIEETEAKFNELGIGQFASVSGRYYAMDRDKRWEREEKAYNAIRNFDAPTYATAKEGVEASYNEGLTDEFVVPFIVENQNDGVNDGDAVIFYNFRPDRAAQLSEIFANRAFEGFKVEQVKDLFYATFTKYNDNIDAAIVFEKVDLNNTIGEIAQNNNLTQLRIAETEKYPHVTYFMSGGRNEEFKGERRRLIDSPKVATYDLKPEMSAYEVKDALLEELNKGDLDLIILNFANPDMVGHSGMLEPTIKAIEAVDECLGEVVDKILDMDGYAIITADHGNSDQVLTDDDQPMTTHTTNPVPVIVTKEGVTLRETGRLGDLAPTLLDLLNVEQPEDMTGESLIKH</sequence>
<reference key="1">
    <citation type="journal article" date="2004" name="Proc. Natl. Acad. Sci. U.S.A.">
        <title>Complete genomes of two clinical Staphylococcus aureus strains: evidence for the rapid evolution of virulence and drug resistance.</title>
        <authorList>
            <person name="Holden M.T.G."/>
            <person name="Feil E.J."/>
            <person name="Lindsay J.A."/>
            <person name="Peacock S.J."/>
            <person name="Day N.P.J."/>
            <person name="Enright M.C."/>
            <person name="Foster T.J."/>
            <person name="Moore C.E."/>
            <person name="Hurst L."/>
            <person name="Atkin R."/>
            <person name="Barron A."/>
            <person name="Bason N."/>
            <person name="Bentley S.D."/>
            <person name="Chillingworth C."/>
            <person name="Chillingworth T."/>
            <person name="Churcher C."/>
            <person name="Clark L."/>
            <person name="Corton C."/>
            <person name="Cronin A."/>
            <person name="Doggett J."/>
            <person name="Dowd L."/>
            <person name="Feltwell T."/>
            <person name="Hance Z."/>
            <person name="Harris B."/>
            <person name="Hauser H."/>
            <person name="Holroyd S."/>
            <person name="Jagels K."/>
            <person name="James K.D."/>
            <person name="Lennard N."/>
            <person name="Line A."/>
            <person name="Mayes R."/>
            <person name="Moule S."/>
            <person name="Mungall K."/>
            <person name="Ormond D."/>
            <person name="Quail M.A."/>
            <person name="Rabbinowitsch E."/>
            <person name="Rutherford K.M."/>
            <person name="Sanders M."/>
            <person name="Sharp S."/>
            <person name="Simmonds M."/>
            <person name="Stevens K."/>
            <person name="Whitehead S."/>
            <person name="Barrell B.G."/>
            <person name="Spratt B.G."/>
            <person name="Parkhill J."/>
        </authorList>
    </citation>
    <scope>NUCLEOTIDE SEQUENCE [LARGE SCALE GENOMIC DNA]</scope>
    <source>
        <strain>MSSA476</strain>
    </source>
</reference>
<keyword id="KW-0324">Glycolysis</keyword>
<keyword id="KW-0413">Isomerase</keyword>
<keyword id="KW-0464">Manganese</keyword>
<keyword id="KW-0479">Metal-binding</keyword>
<comment type="function">
    <text evidence="1">Catalyzes the interconversion of 2-phosphoglycerate and 3-phosphoglycerate.</text>
</comment>
<comment type="catalytic activity">
    <reaction evidence="1">
        <text>(2R)-2-phosphoglycerate = (2R)-3-phosphoglycerate</text>
        <dbReference type="Rhea" id="RHEA:15901"/>
        <dbReference type="ChEBI" id="CHEBI:58272"/>
        <dbReference type="ChEBI" id="CHEBI:58289"/>
        <dbReference type="EC" id="5.4.2.12"/>
    </reaction>
</comment>
<comment type="cofactor">
    <cofactor evidence="1">
        <name>Mn(2+)</name>
        <dbReference type="ChEBI" id="CHEBI:29035"/>
    </cofactor>
    <text evidence="1">Binds 2 manganese ions per subunit.</text>
</comment>
<comment type="pathway">
    <text evidence="1">Carbohydrate degradation; glycolysis; pyruvate from D-glyceraldehyde 3-phosphate: step 3/5.</text>
</comment>
<comment type="subunit">
    <text evidence="1">Monomer.</text>
</comment>
<comment type="similarity">
    <text evidence="1">Belongs to the BPG-independent phosphoglycerate mutase family.</text>
</comment>
<dbReference type="EC" id="5.4.2.12" evidence="1"/>
<dbReference type="EMBL" id="BX571857">
    <property type="protein sequence ID" value="CAG42516.1"/>
    <property type="molecule type" value="Genomic_DNA"/>
</dbReference>
<dbReference type="RefSeq" id="WP_001085505.1">
    <property type="nucleotide sequence ID" value="NC_002953.3"/>
</dbReference>
<dbReference type="SMR" id="Q6GB55"/>
<dbReference type="KEGG" id="sas:SAS0741"/>
<dbReference type="HOGENOM" id="CLU_026099_2_0_9"/>
<dbReference type="UniPathway" id="UPA00109">
    <property type="reaction ID" value="UER00186"/>
</dbReference>
<dbReference type="GO" id="GO:0005829">
    <property type="term" value="C:cytosol"/>
    <property type="evidence" value="ECO:0007669"/>
    <property type="project" value="TreeGrafter"/>
</dbReference>
<dbReference type="GO" id="GO:0030145">
    <property type="term" value="F:manganese ion binding"/>
    <property type="evidence" value="ECO:0007669"/>
    <property type="project" value="UniProtKB-UniRule"/>
</dbReference>
<dbReference type="GO" id="GO:0004619">
    <property type="term" value="F:phosphoglycerate mutase activity"/>
    <property type="evidence" value="ECO:0007669"/>
    <property type="project" value="UniProtKB-EC"/>
</dbReference>
<dbReference type="GO" id="GO:0006007">
    <property type="term" value="P:glucose catabolic process"/>
    <property type="evidence" value="ECO:0007669"/>
    <property type="project" value="InterPro"/>
</dbReference>
<dbReference type="GO" id="GO:0006096">
    <property type="term" value="P:glycolytic process"/>
    <property type="evidence" value="ECO:0007669"/>
    <property type="project" value="UniProtKB-UniRule"/>
</dbReference>
<dbReference type="CDD" id="cd16010">
    <property type="entry name" value="iPGM"/>
    <property type="match status" value="1"/>
</dbReference>
<dbReference type="FunFam" id="3.40.1450.10:FF:000001">
    <property type="entry name" value="2,3-bisphosphoglycerate-independent phosphoglycerate mutase"/>
    <property type="match status" value="1"/>
</dbReference>
<dbReference type="FunFam" id="3.40.720.10:FF:000001">
    <property type="entry name" value="2,3-bisphosphoglycerate-independent phosphoglycerate mutase"/>
    <property type="match status" value="1"/>
</dbReference>
<dbReference type="Gene3D" id="3.40.720.10">
    <property type="entry name" value="Alkaline Phosphatase, subunit A"/>
    <property type="match status" value="1"/>
</dbReference>
<dbReference type="Gene3D" id="3.40.1450.10">
    <property type="entry name" value="BPG-independent phosphoglycerate mutase, domain B"/>
    <property type="match status" value="1"/>
</dbReference>
<dbReference type="HAMAP" id="MF_01038">
    <property type="entry name" value="GpmI"/>
    <property type="match status" value="1"/>
</dbReference>
<dbReference type="InterPro" id="IPR017850">
    <property type="entry name" value="Alkaline_phosphatase_core_sf"/>
</dbReference>
<dbReference type="InterPro" id="IPR011258">
    <property type="entry name" value="BPG-indep_PGM_N"/>
</dbReference>
<dbReference type="InterPro" id="IPR006124">
    <property type="entry name" value="Metalloenzyme"/>
</dbReference>
<dbReference type="InterPro" id="IPR036646">
    <property type="entry name" value="PGAM_B_sf"/>
</dbReference>
<dbReference type="InterPro" id="IPR005995">
    <property type="entry name" value="Pgm_bpd_ind"/>
</dbReference>
<dbReference type="NCBIfam" id="TIGR01307">
    <property type="entry name" value="pgm_bpd_ind"/>
    <property type="match status" value="1"/>
</dbReference>
<dbReference type="PANTHER" id="PTHR31637">
    <property type="entry name" value="2,3-BISPHOSPHOGLYCERATE-INDEPENDENT PHOSPHOGLYCERATE MUTASE"/>
    <property type="match status" value="1"/>
</dbReference>
<dbReference type="PANTHER" id="PTHR31637:SF0">
    <property type="entry name" value="2,3-BISPHOSPHOGLYCERATE-INDEPENDENT PHOSPHOGLYCERATE MUTASE"/>
    <property type="match status" value="1"/>
</dbReference>
<dbReference type="Pfam" id="PF06415">
    <property type="entry name" value="iPGM_N"/>
    <property type="match status" value="1"/>
</dbReference>
<dbReference type="Pfam" id="PF01676">
    <property type="entry name" value="Metalloenzyme"/>
    <property type="match status" value="1"/>
</dbReference>
<dbReference type="PIRSF" id="PIRSF001492">
    <property type="entry name" value="IPGAM"/>
    <property type="match status" value="1"/>
</dbReference>
<dbReference type="SUPFAM" id="SSF64158">
    <property type="entry name" value="2,3-Bisphosphoglycerate-independent phosphoglycerate mutase, substrate-binding domain"/>
    <property type="match status" value="1"/>
</dbReference>
<dbReference type="SUPFAM" id="SSF53649">
    <property type="entry name" value="Alkaline phosphatase-like"/>
    <property type="match status" value="1"/>
</dbReference>
<name>GPMI_STAAS</name>
<feature type="chain" id="PRO_0000212209" description="2,3-bisphosphoglycerate-independent phosphoglycerate mutase">
    <location>
        <begin position="1"/>
        <end position="505"/>
    </location>
</feature>
<feature type="active site" description="Phosphoserine intermediate" evidence="1">
    <location>
        <position position="62"/>
    </location>
</feature>
<feature type="binding site" evidence="1">
    <location>
        <position position="12"/>
    </location>
    <ligand>
        <name>Mn(2+)</name>
        <dbReference type="ChEBI" id="CHEBI:29035"/>
        <label>2</label>
    </ligand>
</feature>
<feature type="binding site" evidence="1">
    <location>
        <position position="62"/>
    </location>
    <ligand>
        <name>Mn(2+)</name>
        <dbReference type="ChEBI" id="CHEBI:29035"/>
        <label>2</label>
    </ligand>
</feature>
<feature type="binding site" evidence="1">
    <location>
        <position position="123"/>
    </location>
    <ligand>
        <name>substrate</name>
    </ligand>
</feature>
<feature type="binding site" evidence="1">
    <location>
        <begin position="153"/>
        <end position="154"/>
    </location>
    <ligand>
        <name>substrate</name>
    </ligand>
</feature>
<feature type="binding site" evidence="1">
    <location>
        <position position="185"/>
    </location>
    <ligand>
        <name>substrate</name>
    </ligand>
</feature>
<feature type="binding site" evidence="1">
    <location>
        <position position="191"/>
    </location>
    <ligand>
        <name>substrate</name>
    </ligand>
</feature>
<feature type="binding site" evidence="1">
    <location>
        <begin position="257"/>
        <end position="260"/>
    </location>
    <ligand>
        <name>substrate</name>
    </ligand>
</feature>
<feature type="binding site" evidence="1">
    <location>
        <position position="330"/>
    </location>
    <ligand>
        <name>substrate</name>
    </ligand>
</feature>
<feature type="binding site" evidence="1">
    <location>
        <position position="397"/>
    </location>
    <ligand>
        <name>Mn(2+)</name>
        <dbReference type="ChEBI" id="CHEBI:29035"/>
        <label>1</label>
    </ligand>
</feature>
<feature type="binding site" evidence="1">
    <location>
        <position position="401"/>
    </location>
    <ligand>
        <name>Mn(2+)</name>
        <dbReference type="ChEBI" id="CHEBI:29035"/>
        <label>1</label>
    </ligand>
</feature>
<feature type="binding site" evidence="1">
    <location>
        <position position="438"/>
    </location>
    <ligand>
        <name>Mn(2+)</name>
        <dbReference type="ChEBI" id="CHEBI:29035"/>
        <label>2</label>
    </ligand>
</feature>
<feature type="binding site" evidence="1">
    <location>
        <position position="439"/>
    </location>
    <ligand>
        <name>Mn(2+)</name>
        <dbReference type="ChEBI" id="CHEBI:29035"/>
        <label>2</label>
    </ligand>
</feature>
<feature type="binding site" evidence="1">
    <location>
        <position position="456"/>
    </location>
    <ligand>
        <name>Mn(2+)</name>
        <dbReference type="ChEBI" id="CHEBI:29035"/>
        <label>1</label>
    </ligand>
</feature>
<evidence type="ECO:0000255" key="1">
    <source>
        <dbReference type="HAMAP-Rule" id="MF_01038"/>
    </source>
</evidence>
<organism>
    <name type="scientific">Staphylococcus aureus (strain MSSA476)</name>
    <dbReference type="NCBI Taxonomy" id="282459"/>
    <lineage>
        <taxon>Bacteria</taxon>
        <taxon>Bacillati</taxon>
        <taxon>Bacillota</taxon>
        <taxon>Bacilli</taxon>
        <taxon>Bacillales</taxon>
        <taxon>Staphylococcaceae</taxon>
        <taxon>Staphylococcus</taxon>
    </lineage>
</organism>
<protein>
    <recommendedName>
        <fullName evidence="1">2,3-bisphosphoglycerate-independent phosphoglycerate mutase</fullName>
        <shortName evidence="1">BPG-independent PGAM</shortName>
        <shortName evidence="1">Phosphoglyceromutase</shortName>
        <shortName evidence="1">iPGM</shortName>
        <ecNumber evidence="1">5.4.2.12</ecNumber>
    </recommendedName>
</protein>
<proteinExistence type="inferred from homology"/>
<accession>Q6GB55</accession>